<organism>
    <name type="scientific">Takifugu rubripes</name>
    <name type="common">Japanese pufferfish</name>
    <name type="synonym">Fugu rubripes</name>
    <dbReference type="NCBI Taxonomy" id="31033"/>
    <lineage>
        <taxon>Eukaryota</taxon>
        <taxon>Metazoa</taxon>
        <taxon>Chordata</taxon>
        <taxon>Craniata</taxon>
        <taxon>Vertebrata</taxon>
        <taxon>Euteleostomi</taxon>
        <taxon>Actinopterygii</taxon>
        <taxon>Neopterygii</taxon>
        <taxon>Teleostei</taxon>
        <taxon>Neoteleostei</taxon>
        <taxon>Acanthomorphata</taxon>
        <taxon>Eupercaria</taxon>
        <taxon>Tetraodontiformes</taxon>
        <taxon>Tetradontoidea</taxon>
        <taxon>Tetraodontidae</taxon>
        <taxon>Takifugu</taxon>
    </lineage>
</organism>
<reference key="1">
    <citation type="journal article" date="1997" name="Gene">
        <title>Molecular cloning of 5-hydroxytryptamine (5-HT) type 1 receptor genes from the Japanese puffer fish, Fugu rubripes.</title>
        <authorList>
            <person name="Yamaguchi F."/>
            <person name="Brenner S."/>
        </authorList>
    </citation>
    <scope>NUCLEOTIDE SEQUENCE [GENOMIC DNA]</scope>
    <source>
        <tissue>Testis</tissue>
    </source>
</reference>
<evidence type="ECO:0000250" key="1">
    <source>
        <dbReference type="UniProtKB" id="P08908"/>
    </source>
</evidence>
<evidence type="ECO:0000250" key="2">
    <source>
        <dbReference type="UniProtKB" id="P41595"/>
    </source>
</evidence>
<evidence type="ECO:0000255" key="3"/>
<evidence type="ECO:0000255" key="4">
    <source>
        <dbReference type="PROSITE-ProRule" id="PRU00521"/>
    </source>
</evidence>
<sequence length="416" mass="47031">MEGTNNTTGWTHFDSTSNRTSKSFDEEVKLSYQVVTSFLLGALILCSIFGNACVVAAIALERSLQNVANYLIGSLAVTDLMVSVLVLPMAALYQVLNRWTLGQIPCDIFISLDMLCCTSSILHLCVIALDRYWAITEPIDYMKKRTPRRAAVLISVTWLVGFSISIPPMLIMRSQPSSMAEDRANSKQCKITQDPWYTIYSTFGAFYIPLTLMLVLYGRIFKAARFRIRRTVRKTEKKKVSDTCLALSPAMFHRKTPGDAHGKSWKRSVEPRPLPNVNGAVKHAGEGESLDIIEVQSNSRCNLPLPNTPGTVPLFENRHEKATETKRKIALARERKTVKTLGIIMGTFILCWLPFFIVALVMPFCQESCFMPHWLKDVINWLGYSNSLLNPIIYAYFNKDFQSAFKKIIKCHFCRA</sequence>
<keyword id="KW-0085">Behavior</keyword>
<keyword id="KW-1003">Cell membrane</keyword>
<keyword id="KW-1015">Disulfide bond</keyword>
<keyword id="KW-0297">G-protein coupled receptor</keyword>
<keyword id="KW-0325">Glycoprotein</keyword>
<keyword id="KW-0472">Membrane</keyword>
<keyword id="KW-0675">Receptor</keyword>
<keyword id="KW-1185">Reference proteome</keyword>
<keyword id="KW-0807">Transducer</keyword>
<keyword id="KW-0812">Transmembrane</keyword>
<keyword id="KW-1133">Transmembrane helix</keyword>
<dbReference type="EMBL" id="X95937">
    <property type="protein sequence ID" value="CAA65176.1"/>
    <property type="molecule type" value="Genomic_DNA"/>
</dbReference>
<dbReference type="RefSeq" id="XP_003977344.1">
    <property type="nucleotide sequence ID" value="XM_003977295.1"/>
</dbReference>
<dbReference type="SMR" id="O42384"/>
<dbReference type="STRING" id="31033.ENSTRUP00000014451"/>
<dbReference type="GlyCosmos" id="O42384">
    <property type="glycosylation" value="3 sites, No reported glycans"/>
</dbReference>
<dbReference type="Ensembl" id="ENSTRUT00000014518.3">
    <property type="protein sequence ID" value="ENSTRUP00000014451.3"/>
    <property type="gene ID" value="ENSTRUG00000005939.3"/>
</dbReference>
<dbReference type="GeneID" id="101072291"/>
<dbReference type="KEGG" id="tru:101072291"/>
<dbReference type="CTD" id="101072291"/>
<dbReference type="GeneTree" id="ENSGT01010000222287"/>
<dbReference type="InParanoid" id="O42384"/>
<dbReference type="OMA" id="QDPWYTI"/>
<dbReference type="OrthoDB" id="5955450at2759"/>
<dbReference type="Proteomes" id="UP000005226">
    <property type="component" value="Chromosome 6"/>
</dbReference>
<dbReference type="GO" id="GO:0005886">
    <property type="term" value="C:plasma membrane"/>
    <property type="evidence" value="ECO:0000250"/>
    <property type="project" value="UniProtKB"/>
</dbReference>
<dbReference type="GO" id="GO:0004993">
    <property type="term" value="F:G protein-coupled serotonin receptor activity"/>
    <property type="evidence" value="ECO:0000250"/>
    <property type="project" value="UniProtKB"/>
</dbReference>
<dbReference type="GO" id="GO:0071880">
    <property type="term" value="P:adenylate cyclase-activating adrenergic receptor signaling pathway"/>
    <property type="evidence" value="ECO:0007669"/>
    <property type="project" value="TreeGrafter"/>
</dbReference>
<dbReference type="GO" id="GO:0007198">
    <property type="term" value="P:adenylate cyclase-inhibiting serotonin receptor signaling pathway"/>
    <property type="evidence" value="ECO:0000250"/>
    <property type="project" value="UniProtKB"/>
</dbReference>
<dbReference type="GO" id="GO:0043410">
    <property type="term" value="P:positive regulation of MAPK cascade"/>
    <property type="evidence" value="ECO:0007669"/>
    <property type="project" value="TreeGrafter"/>
</dbReference>
<dbReference type="GO" id="GO:0050795">
    <property type="term" value="P:regulation of behavior"/>
    <property type="evidence" value="ECO:0007669"/>
    <property type="project" value="InterPro"/>
</dbReference>
<dbReference type="GO" id="GO:0046883">
    <property type="term" value="P:regulation of hormone secretion"/>
    <property type="evidence" value="ECO:0007669"/>
    <property type="project" value="InterPro"/>
</dbReference>
<dbReference type="GO" id="GO:0019229">
    <property type="term" value="P:regulation of vasoconstriction"/>
    <property type="evidence" value="ECO:0007669"/>
    <property type="project" value="InterPro"/>
</dbReference>
<dbReference type="GO" id="GO:0007210">
    <property type="term" value="P:serotonin receptor signaling pathway"/>
    <property type="evidence" value="ECO:0000250"/>
    <property type="project" value="UniProtKB"/>
</dbReference>
<dbReference type="FunFam" id="1.20.1070.10:FF:000248">
    <property type="entry name" value="5-hydroxytryptamine receptor 1A-beta"/>
    <property type="match status" value="1"/>
</dbReference>
<dbReference type="FunFam" id="1.20.1070.10:FF:000863">
    <property type="entry name" value="5-hydroxytryptamine receptor 1A-beta"/>
    <property type="match status" value="1"/>
</dbReference>
<dbReference type="Gene3D" id="1.20.1070.10">
    <property type="entry name" value="Rhodopsin 7-helix transmembrane proteins"/>
    <property type="match status" value="2"/>
</dbReference>
<dbReference type="InterPro" id="IPR000610">
    <property type="entry name" value="5HT1A_rcpt"/>
</dbReference>
<dbReference type="InterPro" id="IPR002231">
    <property type="entry name" value="5HT_rcpt"/>
</dbReference>
<dbReference type="InterPro" id="IPR000276">
    <property type="entry name" value="GPCR_Rhodpsn"/>
</dbReference>
<dbReference type="InterPro" id="IPR017452">
    <property type="entry name" value="GPCR_Rhodpsn_7TM"/>
</dbReference>
<dbReference type="PANTHER" id="PTHR24248:SF191">
    <property type="entry name" value="5-HYDROXYTRYPTAMINE RECEPTOR 1A"/>
    <property type="match status" value="1"/>
</dbReference>
<dbReference type="PANTHER" id="PTHR24248">
    <property type="entry name" value="ADRENERGIC RECEPTOR-RELATED G-PROTEIN COUPLED RECEPTOR"/>
    <property type="match status" value="1"/>
</dbReference>
<dbReference type="Pfam" id="PF00001">
    <property type="entry name" value="7tm_1"/>
    <property type="match status" value="1"/>
</dbReference>
<dbReference type="PRINTS" id="PR00512">
    <property type="entry name" value="5HT1ARECEPTR"/>
</dbReference>
<dbReference type="PRINTS" id="PR01101">
    <property type="entry name" value="5HTRECEPTOR"/>
</dbReference>
<dbReference type="PRINTS" id="PR00237">
    <property type="entry name" value="GPCRRHODOPSN"/>
</dbReference>
<dbReference type="SMART" id="SM01381">
    <property type="entry name" value="7TM_GPCR_Srsx"/>
    <property type="match status" value="1"/>
</dbReference>
<dbReference type="SUPFAM" id="SSF81321">
    <property type="entry name" value="Family A G protein-coupled receptor-like"/>
    <property type="match status" value="1"/>
</dbReference>
<dbReference type="PROSITE" id="PS00237">
    <property type="entry name" value="G_PROTEIN_RECEP_F1_1"/>
    <property type="match status" value="1"/>
</dbReference>
<dbReference type="PROSITE" id="PS50262">
    <property type="entry name" value="G_PROTEIN_RECEP_F1_2"/>
    <property type="match status" value="1"/>
</dbReference>
<comment type="function">
    <text evidence="1">G-protein coupled receptor for 5-hydroxytryptamine (serotonin). Also functions as a receptor for various drugs and psychoactive substances. Ligand binding causes a conformation change that triggers signaling via guanine nucleotide-binding proteins (G proteins) and modulates the activity of downstream effectors, such as adenylate cyclase. HTR1A is coupled to G(i)/G(o) G alpha proteins and mediates inhibitory neurotransmission: signaling inhibits adenylate cyclase activity and activates a phosphatidylinositol-calcium second messenger system that regulates the release of Ca(2+) ions from intracellular stores. Beta-arrestin family members regulate signaling by mediating both receptor desensitization and resensitization processes.</text>
</comment>
<comment type="activity regulation">
    <text evidence="1">G-protein coupled receptor activity is regulated by lipids: phosphatidylinositol 4-phosphate increases HTR1A-mediated activity.</text>
</comment>
<comment type="subcellular location">
    <subcellularLocation>
        <location evidence="1">Cell membrane</location>
        <topology evidence="1">Multi-pass membrane protein</topology>
    </subcellularLocation>
</comment>
<comment type="similarity">
    <text evidence="4">Belongs to the G-protein coupled receptor 1 family. 5-hydroxytryptamine receptor subfamily.</text>
</comment>
<accession>O42384</accession>
<proteinExistence type="inferred from homology"/>
<feature type="chain" id="PRO_0000068924" description="5-hydroxytryptamine receptor 1A-beta">
    <location>
        <begin position="1"/>
        <end position="416"/>
    </location>
</feature>
<feature type="topological domain" description="Extracellular" evidence="1">
    <location>
        <begin position="1"/>
        <end position="35"/>
    </location>
</feature>
<feature type="transmembrane region" description="Helical; Name=1" evidence="1">
    <location>
        <begin position="36"/>
        <end position="56"/>
    </location>
</feature>
<feature type="topological domain" description="Cytoplasmic" evidence="1">
    <location>
        <begin position="57"/>
        <end position="70"/>
    </location>
</feature>
<feature type="transmembrane region" description="Helical; Name=2" evidence="1">
    <location>
        <begin position="71"/>
        <end position="95"/>
    </location>
</feature>
<feature type="topological domain" description="Extracellular" evidence="1">
    <location>
        <begin position="96"/>
        <end position="104"/>
    </location>
</feature>
<feature type="transmembrane region" description="Helical; Name=3" evidence="1">
    <location>
        <begin position="105"/>
        <end position="129"/>
    </location>
</feature>
<feature type="topological domain" description="Cytoplasmic" evidence="1">
    <location>
        <begin position="130"/>
        <end position="149"/>
    </location>
</feature>
<feature type="transmembrane region" description="Helical; Name=4" evidence="1">
    <location>
        <begin position="150"/>
        <end position="171"/>
    </location>
</feature>
<feature type="topological domain" description="Extracellular" evidence="1">
    <location>
        <begin position="172"/>
        <end position="195"/>
    </location>
</feature>
<feature type="transmembrane region" description="Helical; Name=5" evidence="1">
    <location>
        <begin position="196"/>
        <end position="218"/>
    </location>
</feature>
<feature type="topological domain" description="Cytoplasmic" evidence="1">
    <location>
        <begin position="219"/>
        <end position="340"/>
    </location>
</feature>
<feature type="transmembrane region" description="Helical; Name=6" evidence="1">
    <location>
        <begin position="341"/>
        <end position="364"/>
    </location>
</feature>
<feature type="topological domain" description="Extracellular" evidence="1">
    <location>
        <begin position="365"/>
        <end position="372"/>
    </location>
</feature>
<feature type="transmembrane region" description="Helical; Name=7" evidence="1">
    <location>
        <begin position="373"/>
        <end position="397"/>
    </location>
</feature>
<feature type="topological domain" description="Cytoplasmic" evidence="1">
    <location>
        <begin position="398"/>
        <end position="416"/>
    </location>
</feature>
<feature type="short sequence motif" description="DRY motif; important for ligand-induced conformation changes" evidence="2">
    <location>
        <begin position="130"/>
        <end position="132"/>
    </location>
</feature>
<feature type="short sequence motif" description="NPxxY motif; important for ligand-induced conformation changes and signaling" evidence="2">
    <location>
        <begin position="390"/>
        <end position="394"/>
    </location>
</feature>
<feature type="binding site" evidence="1">
    <location>
        <position position="113"/>
    </location>
    <ligand>
        <name>serotonin</name>
        <dbReference type="ChEBI" id="CHEBI:350546"/>
    </ligand>
</feature>
<feature type="binding site" evidence="1">
    <location>
        <position position="117"/>
    </location>
    <ligand>
        <name>serotonin</name>
        <dbReference type="ChEBI" id="CHEBI:350546"/>
    </ligand>
</feature>
<feature type="binding site" evidence="1">
    <location>
        <position position="339"/>
    </location>
    <ligand>
        <name>1D-myo-inositol 4-phosphate</name>
        <dbReference type="ChEBI" id="CHEBI:58469"/>
    </ligand>
</feature>
<feature type="binding site" evidence="1">
    <location>
        <position position="340"/>
    </location>
    <ligand>
        <name>1D-myo-inositol 4-phosphate</name>
        <dbReference type="ChEBI" id="CHEBI:58469"/>
    </ligand>
</feature>
<feature type="binding site" evidence="1">
    <location>
        <position position="346"/>
    </location>
    <ligand>
        <name>1D-myo-inositol 4-phosphate</name>
        <dbReference type="ChEBI" id="CHEBI:58469"/>
    </ligand>
</feature>
<feature type="binding site" evidence="1">
    <location>
        <position position="397"/>
    </location>
    <ligand>
        <name>1D-myo-inositol 4-phosphate</name>
        <dbReference type="ChEBI" id="CHEBI:58469"/>
    </ligand>
</feature>
<feature type="binding site" evidence="1">
    <location>
        <position position="398"/>
    </location>
    <ligand>
        <name>1D-myo-inositol 4-phosphate</name>
        <dbReference type="ChEBI" id="CHEBI:58469"/>
    </ligand>
</feature>
<feature type="binding site" evidence="1">
    <location>
        <position position="399"/>
    </location>
    <ligand>
        <name>1D-myo-inositol 4-phosphate</name>
        <dbReference type="ChEBI" id="CHEBI:58469"/>
    </ligand>
</feature>
<feature type="glycosylation site" description="N-linked (GlcNAc...) asparagine" evidence="3">
    <location>
        <position position="5"/>
    </location>
</feature>
<feature type="glycosylation site" description="N-linked (GlcNAc...) asparagine" evidence="3">
    <location>
        <position position="6"/>
    </location>
</feature>
<feature type="glycosylation site" description="N-linked (GlcNAc...) asparagine" evidence="3">
    <location>
        <position position="18"/>
    </location>
</feature>
<feature type="disulfide bond" evidence="4">
    <location>
        <begin position="106"/>
        <end position="189"/>
    </location>
</feature>
<protein>
    <recommendedName>
        <fullName>5-hydroxytryptamine receptor 1A-beta</fullName>
        <shortName>5-HT-1A-beta</shortName>
        <shortName>5-HT1A-beta</shortName>
    </recommendedName>
    <alternativeName>
        <fullName>F1B</fullName>
    </alternativeName>
    <alternativeName>
        <fullName>Serotonin receptor 1A-beta</fullName>
    </alternativeName>
</protein>
<name>5H1AB_TAKRU</name>
<gene>
    <name type="primary">htr1a-B</name>
</gene>